<protein>
    <recommendedName>
        <fullName evidence="2">NADH-quinone oxidoreductase subunit B</fullName>
        <ecNumber evidence="2">7.1.1.-</ecNumber>
    </recommendedName>
    <alternativeName>
        <fullName evidence="2">NADH dehydrogenase I subunit B</fullName>
    </alternativeName>
    <alternativeName>
        <fullName evidence="2">NDH-1 subunit B</fullName>
    </alternativeName>
</protein>
<accession>Q89AU5</accession>
<comment type="function">
    <text evidence="1">NDH-1 shuttles electrons from NADH, via FMN and iron-sulfur (Fe-S) centers, to quinones in the respiratory chain. Couples the redox reaction to proton translocation (for every two electrons transferred, four hydrogen ions are translocated across the cytoplasmic membrane), and thus conserves the redox energy in a proton gradient (By similarity).</text>
</comment>
<comment type="catalytic activity">
    <reaction evidence="2">
        <text>a quinone + NADH + 5 H(+)(in) = a quinol + NAD(+) + 4 H(+)(out)</text>
        <dbReference type="Rhea" id="RHEA:57888"/>
        <dbReference type="ChEBI" id="CHEBI:15378"/>
        <dbReference type="ChEBI" id="CHEBI:24646"/>
        <dbReference type="ChEBI" id="CHEBI:57540"/>
        <dbReference type="ChEBI" id="CHEBI:57945"/>
        <dbReference type="ChEBI" id="CHEBI:132124"/>
    </reaction>
</comment>
<comment type="cofactor">
    <cofactor evidence="2">
        <name>[4Fe-4S] cluster</name>
        <dbReference type="ChEBI" id="CHEBI:49883"/>
    </cofactor>
    <text evidence="2">Binds 1 [4Fe-4S] cluster.</text>
</comment>
<comment type="subunit">
    <text evidence="2">NDH-1 is composed of 13 different subunits. Subunits NuoB, CD, E, F, and G constitute the peripheral sector of the complex.</text>
</comment>
<comment type="subcellular location">
    <subcellularLocation>
        <location evidence="2">Cell membrane</location>
        <topology evidence="2">Peripheral membrane protein</topology>
        <orientation evidence="2">Cytoplasmic side</orientation>
    </subcellularLocation>
</comment>
<comment type="similarity">
    <text evidence="2">Belongs to the complex I 20 kDa subunit family.</text>
</comment>
<sequence length="222" mass="25606">MKYTLTRVNISDDDQNYPREKKIQVSDPTKKYIQKNVFMGTLSKVLHNLVNWGRKNSLWPYNFGLSCCYVEMVTSFTSVHDISRFGSEVLRASPRQADFMVIAGTPFIKMVPIIQRLYDQMLEPKWVISMGSCANSGGMYDIYSVVQGVDKFLPVDVYIPGCPPRPEAYIHGLMLLQKSISKERRPLSWIIGEQGIYKANFNSEKKNLRKMRNLVKYSQDKN</sequence>
<name>NUOB_BUCBP</name>
<feature type="chain" id="PRO_0000118771" description="NADH-quinone oxidoreductase subunit B">
    <location>
        <begin position="1"/>
        <end position="222"/>
    </location>
</feature>
<feature type="binding site" evidence="2">
    <location>
        <position position="67"/>
    </location>
    <ligand>
        <name>[4Fe-4S] cluster</name>
        <dbReference type="ChEBI" id="CHEBI:49883"/>
    </ligand>
</feature>
<feature type="binding site" evidence="2">
    <location>
        <position position="68"/>
    </location>
    <ligand>
        <name>[4Fe-4S] cluster</name>
        <dbReference type="ChEBI" id="CHEBI:49883"/>
    </ligand>
</feature>
<feature type="binding site" evidence="2">
    <location>
        <position position="133"/>
    </location>
    <ligand>
        <name>[4Fe-4S] cluster</name>
        <dbReference type="ChEBI" id="CHEBI:49883"/>
    </ligand>
</feature>
<feature type="binding site" evidence="2">
    <location>
        <position position="162"/>
    </location>
    <ligand>
        <name>[4Fe-4S] cluster</name>
        <dbReference type="ChEBI" id="CHEBI:49883"/>
    </ligand>
</feature>
<keyword id="KW-0004">4Fe-4S</keyword>
<keyword id="KW-1003">Cell membrane</keyword>
<keyword id="KW-0408">Iron</keyword>
<keyword id="KW-0411">Iron-sulfur</keyword>
<keyword id="KW-0472">Membrane</keyword>
<keyword id="KW-0479">Metal-binding</keyword>
<keyword id="KW-0520">NAD</keyword>
<keyword id="KW-0874">Quinone</keyword>
<keyword id="KW-1185">Reference proteome</keyword>
<keyword id="KW-1278">Translocase</keyword>
<keyword id="KW-0813">Transport</keyword>
<keyword id="KW-0830">Ubiquinone</keyword>
<proteinExistence type="inferred from homology"/>
<dbReference type="EC" id="7.1.1.-" evidence="2"/>
<dbReference type="EMBL" id="AE016826">
    <property type="protein sequence ID" value="AAO26878.1"/>
    <property type="molecule type" value="Genomic_DNA"/>
</dbReference>
<dbReference type="RefSeq" id="WP_011091279.1">
    <property type="nucleotide sequence ID" value="NC_004545.1"/>
</dbReference>
<dbReference type="SMR" id="Q89AU5"/>
<dbReference type="STRING" id="224915.bbp_144"/>
<dbReference type="KEGG" id="bab:bbp_144"/>
<dbReference type="eggNOG" id="COG0377">
    <property type="taxonomic scope" value="Bacteria"/>
</dbReference>
<dbReference type="HOGENOM" id="CLU_055737_7_3_6"/>
<dbReference type="OrthoDB" id="9786737at2"/>
<dbReference type="Proteomes" id="UP000000601">
    <property type="component" value="Chromosome"/>
</dbReference>
<dbReference type="GO" id="GO:0005886">
    <property type="term" value="C:plasma membrane"/>
    <property type="evidence" value="ECO:0007669"/>
    <property type="project" value="UniProtKB-SubCell"/>
</dbReference>
<dbReference type="GO" id="GO:0045271">
    <property type="term" value="C:respiratory chain complex I"/>
    <property type="evidence" value="ECO:0007669"/>
    <property type="project" value="TreeGrafter"/>
</dbReference>
<dbReference type="GO" id="GO:0051539">
    <property type="term" value="F:4 iron, 4 sulfur cluster binding"/>
    <property type="evidence" value="ECO:0007669"/>
    <property type="project" value="UniProtKB-KW"/>
</dbReference>
<dbReference type="GO" id="GO:0005506">
    <property type="term" value="F:iron ion binding"/>
    <property type="evidence" value="ECO:0007669"/>
    <property type="project" value="UniProtKB-UniRule"/>
</dbReference>
<dbReference type="GO" id="GO:0008137">
    <property type="term" value="F:NADH dehydrogenase (ubiquinone) activity"/>
    <property type="evidence" value="ECO:0007669"/>
    <property type="project" value="InterPro"/>
</dbReference>
<dbReference type="GO" id="GO:0050136">
    <property type="term" value="F:NADH:ubiquinone reductase (non-electrogenic) activity"/>
    <property type="evidence" value="ECO:0007669"/>
    <property type="project" value="UniProtKB-UniRule"/>
</dbReference>
<dbReference type="GO" id="GO:0048038">
    <property type="term" value="F:quinone binding"/>
    <property type="evidence" value="ECO:0007669"/>
    <property type="project" value="UniProtKB-KW"/>
</dbReference>
<dbReference type="GO" id="GO:0009060">
    <property type="term" value="P:aerobic respiration"/>
    <property type="evidence" value="ECO:0007669"/>
    <property type="project" value="TreeGrafter"/>
</dbReference>
<dbReference type="GO" id="GO:0015990">
    <property type="term" value="P:electron transport coupled proton transport"/>
    <property type="evidence" value="ECO:0007669"/>
    <property type="project" value="TreeGrafter"/>
</dbReference>
<dbReference type="FunFam" id="3.40.50.12280:FF:000002">
    <property type="entry name" value="NADH-quinone oxidoreductase subunit B"/>
    <property type="match status" value="1"/>
</dbReference>
<dbReference type="Gene3D" id="3.40.50.12280">
    <property type="match status" value="1"/>
</dbReference>
<dbReference type="HAMAP" id="MF_01356">
    <property type="entry name" value="NDH1_NuoB"/>
    <property type="match status" value="1"/>
</dbReference>
<dbReference type="InterPro" id="IPR006137">
    <property type="entry name" value="NADH_UbQ_OxRdtase-like_20kDa"/>
</dbReference>
<dbReference type="InterPro" id="IPR006138">
    <property type="entry name" value="NADH_UQ_OxRdtase_20Kd_su"/>
</dbReference>
<dbReference type="NCBIfam" id="TIGR01957">
    <property type="entry name" value="nuoB_fam"/>
    <property type="match status" value="1"/>
</dbReference>
<dbReference type="NCBIfam" id="NF005012">
    <property type="entry name" value="PRK06411.1"/>
    <property type="match status" value="1"/>
</dbReference>
<dbReference type="PANTHER" id="PTHR11995">
    <property type="entry name" value="NADH DEHYDROGENASE"/>
    <property type="match status" value="1"/>
</dbReference>
<dbReference type="PANTHER" id="PTHR11995:SF14">
    <property type="entry name" value="NADH DEHYDROGENASE [UBIQUINONE] IRON-SULFUR PROTEIN 7, MITOCHONDRIAL"/>
    <property type="match status" value="1"/>
</dbReference>
<dbReference type="Pfam" id="PF01058">
    <property type="entry name" value="Oxidored_q6"/>
    <property type="match status" value="1"/>
</dbReference>
<dbReference type="SUPFAM" id="SSF56770">
    <property type="entry name" value="HydA/Nqo6-like"/>
    <property type="match status" value="1"/>
</dbReference>
<dbReference type="PROSITE" id="PS01150">
    <property type="entry name" value="COMPLEX1_20K"/>
    <property type="match status" value="1"/>
</dbReference>
<reference key="1">
    <citation type="journal article" date="2003" name="Proc. Natl. Acad. Sci. U.S.A.">
        <title>Reductive genome evolution in Buchnera aphidicola.</title>
        <authorList>
            <person name="van Ham R.C.H.J."/>
            <person name="Kamerbeek J."/>
            <person name="Palacios C."/>
            <person name="Rausell C."/>
            <person name="Abascal F."/>
            <person name="Bastolla U."/>
            <person name="Fernandez J.M."/>
            <person name="Jimenez L."/>
            <person name="Postigo M."/>
            <person name="Silva F.J."/>
            <person name="Tamames J."/>
            <person name="Viguera E."/>
            <person name="Latorre A."/>
            <person name="Valencia A."/>
            <person name="Moran F."/>
            <person name="Moya A."/>
        </authorList>
    </citation>
    <scope>NUCLEOTIDE SEQUENCE [LARGE SCALE GENOMIC DNA]</scope>
    <source>
        <strain>Bp</strain>
    </source>
</reference>
<gene>
    <name evidence="2" type="primary">nuoB</name>
    <name type="ordered locus">bbp_144</name>
</gene>
<organism>
    <name type="scientific">Buchnera aphidicola subsp. Baizongia pistaciae (strain Bp)</name>
    <dbReference type="NCBI Taxonomy" id="224915"/>
    <lineage>
        <taxon>Bacteria</taxon>
        <taxon>Pseudomonadati</taxon>
        <taxon>Pseudomonadota</taxon>
        <taxon>Gammaproteobacteria</taxon>
        <taxon>Enterobacterales</taxon>
        <taxon>Erwiniaceae</taxon>
        <taxon>Buchnera</taxon>
    </lineage>
</organism>
<evidence type="ECO:0000250" key="1"/>
<evidence type="ECO:0000255" key="2">
    <source>
        <dbReference type="HAMAP-Rule" id="MF_01356"/>
    </source>
</evidence>